<keyword id="KW-0002">3D-structure</keyword>
<keyword id="KW-0167">Capsid protein</keyword>
<keyword id="KW-0903">Direct protein sequencing</keyword>
<keyword id="KW-0694">RNA-binding</keyword>
<keyword id="KW-1142">T=3 icosahedral capsid protein</keyword>
<keyword id="KW-0946">Virion</keyword>
<organismHost>
    <name type="scientific">Capsicum annuum</name>
    <name type="common">Capsicum pepper</name>
    <dbReference type="NCBI Taxonomy" id="4072"/>
</organismHost>
<organismHost>
    <name type="scientific">Malus</name>
    <dbReference type="NCBI Taxonomy" id="3749"/>
</organismHost>
<organismHost>
    <name type="scientific">Pyrus</name>
    <name type="common">pears</name>
    <dbReference type="NCBI Taxonomy" id="3766"/>
</organismHost>
<organismHost>
    <name type="scientific">Solanum lycopersicum</name>
    <name type="common">Tomato</name>
    <name type="synonym">Lycopersicon esculentum</name>
    <dbReference type="NCBI Taxonomy" id="4081"/>
</organismHost>
<organismHost>
    <name type="scientific">Solanum melongena</name>
    <name type="common">eggplant</name>
    <dbReference type="NCBI Taxonomy" id="4111"/>
</organismHost>
<organismHost>
    <name type="scientific">Tolmiea menziesii</name>
    <dbReference type="NCBI Taxonomy" id="29777"/>
</organismHost>
<organismHost>
    <name type="scientific">Tulipa</name>
    <dbReference type="NCBI Taxonomy" id="13305"/>
</organismHost>
<comment type="function">
    <text>Capsid protein self-assembles to form an icosahedral capsid with a T=3 symmetry, about 32-35 nm in diameter, and consisting of 180 capsid proteins.</text>
</comment>
<comment type="subunit">
    <text evidence="3">Homomultimer.</text>
</comment>
<comment type="subcellular location">
    <subcellularLocation>
        <location evidence="3">Virion</location>
    </subcellularLocation>
</comment>
<comment type="PTM">
    <text evidence="3">The N-terminus is blocked.</text>
</comment>
<comment type="similarity">
    <text evidence="3">Belongs to the icosahedral plant coat protein family.</text>
</comment>
<comment type="online information" name="Virus Particle ExploreR db">
    <link uri="https://viperdb.org/Info_Page.php?VDB=2tbv"/>
    <text>Icosahedral capsid structure</text>
</comment>
<protein>
    <recommendedName>
        <fullName>Capsid protein</fullName>
    </recommendedName>
    <alternativeName>
        <fullName>Coat protein</fullName>
    </alternativeName>
    <alternativeName>
        <fullName>p41</fullName>
    </alternativeName>
</protein>
<dbReference type="EMBL" id="AJ271328">
    <property type="protein sequence ID" value="CAB66390.1"/>
    <property type="molecule type" value="mRNA"/>
</dbReference>
<dbReference type="PIR" id="S07259">
    <property type="entry name" value="S07259"/>
</dbReference>
<dbReference type="PDB" id="2TBV">
    <property type="method" value="X-ray"/>
    <property type="resolution" value="2.90 A"/>
    <property type="chains" value="A/B/C=2-388"/>
</dbReference>
<dbReference type="PDBsum" id="2TBV"/>
<dbReference type="SMR" id="P11795"/>
<dbReference type="EvolutionaryTrace" id="P11795"/>
<dbReference type="GO" id="GO:0039617">
    <property type="term" value="C:T=3 icosahedral viral capsid"/>
    <property type="evidence" value="ECO:0007669"/>
    <property type="project" value="UniProtKB-KW"/>
</dbReference>
<dbReference type="GO" id="GO:0003723">
    <property type="term" value="F:RNA binding"/>
    <property type="evidence" value="ECO:0007669"/>
    <property type="project" value="UniProtKB-KW"/>
</dbReference>
<dbReference type="GO" id="GO:0005198">
    <property type="term" value="F:structural molecule activity"/>
    <property type="evidence" value="ECO:0007669"/>
    <property type="project" value="InterPro"/>
</dbReference>
<dbReference type="Gene3D" id="2.60.120.20">
    <property type="match status" value="1"/>
</dbReference>
<dbReference type="InterPro" id="IPR000937">
    <property type="entry name" value="Capsid_prot_S-dom_vir"/>
</dbReference>
<dbReference type="InterPro" id="IPR055068">
    <property type="entry name" value="Coat_P"/>
</dbReference>
<dbReference type="InterPro" id="IPR029053">
    <property type="entry name" value="Viral_coat"/>
</dbReference>
<dbReference type="Pfam" id="PF22402">
    <property type="entry name" value="Coat_P"/>
    <property type="match status" value="1"/>
</dbReference>
<dbReference type="Pfam" id="PF00729">
    <property type="entry name" value="Viral_coat"/>
    <property type="match status" value="1"/>
</dbReference>
<dbReference type="PRINTS" id="PR00233">
    <property type="entry name" value="ICOSAHEDRAL"/>
</dbReference>
<dbReference type="SUPFAM" id="SSF88633">
    <property type="entry name" value="Positive stranded ssRNA viruses"/>
    <property type="match status" value="1"/>
</dbReference>
<dbReference type="PROSITE" id="PS00555">
    <property type="entry name" value="ICOSAH_VIR_COAT_S"/>
    <property type="match status" value="1"/>
</dbReference>
<gene>
    <name type="ORF">ORF2</name>
</gene>
<name>CAPSD_TBSVB</name>
<sequence>MAMTTRNNNNVLAISKKQLGVLAASAAVGALRNHISESSPALLQSAVGLGKKALNKVRNRRKQGNQQIITHVGGVGGSIMAPVAVSRQLVGSKPKFTGRTSGSVTVTHREYLTQVNNSSGFVVNGGIVGNLLQLNPSNGTLFSWLPAIASNFDQYSFNSVVLHYVPLCGTTEVGRVALYFDKDSQDPEPADRVELANFGVLKETAPWAEAMLRIPTDKVKRYCNDSATVDQKLIDLGQLGIATYGGAGTNAVGDVFISYSVTLYFPQPTNTLLSTRRLDLTGSLADATGPGYLVLTRTPTVLTHTFRVTGTFNLSGGLRCLTSLTLGATGAVVINDILAIDNVGTASAYFLNCTVSSLPATVTFTTTGISSATVNVVRGTRANVVNLL</sequence>
<reference key="1">
    <citation type="journal article" date="2000" name="J. Plant Pathol.">
        <title>Molecular characterization of a tombusvirus associated with a disease of statice (Goniolimon tataricum (L.) Boiss.).</title>
        <authorList>
            <person name="Galetzka D."/>
            <person name="Russo M."/>
            <person name="Rubino L."/>
            <person name="Krczal G."/>
        </authorList>
    </citation>
    <scope>NUCLEOTIDE SEQUENCE [MRNA]</scope>
</reference>
<reference key="2">
    <citation type="journal article" date="1984" name="J. Mol. Biol.">
        <title>Structure of tomato bushy stunt virus. V. Coat protein sequence determination and its structural implications.</title>
        <authorList>
            <person name="Hopper P."/>
            <person name="Harrison S.C."/>
            <person name="Sauer R.T."/>
        </authorList>
    </citation>
    <scope>PROTEIN SEQUENCE OF 2-388</scope>
</reference>
<reference key="3">
    <citation type="journal article" date="1983" name="J. Mol. Biol.">
        <title>Structure of tomato bushy stunt virus IV. The virus particle at 2.9-A resolution.</title>
        <authorList>
            <person name="Olson A.J."/>
            <person name="Bricogne G."/>
            <person name="Harrison S.C."/>
        </authorList>
    </citation>
    <scope>X-RAY CRYSTALLOGRAPHY (2.9 ANGSTROMS)</scope>
</reference>
<reference key="4">
    <citation type="journal article" date="1978" name="Nature">
        <title>Tomato bushy stunt virus at 2.9 A resolution.</title>
        <authorList>
            <person name="Harrison S.C."/>
            <person name="Olson A.J."/>
            <person name="Schutt C.E."/>
            <person name="Winkler F.K."/>
            <person name="Bricogne G."/>
        </authorList>
    </citation>
    <scope>X-RAY CRYSTALLOGRAPHY (2.9 ANGSTROMS)</scope>
</reference>
<feature type="initiator methionine" description="Removed" evidence="2">
    <location>
        <position position="1"/>
    </location>
</feature>
<feature type="chain" id="PRO_0000222866" description="Capsid protein">
    <location>
        <begin position="2"/>
        <end position="388"/>
    </location>
</feature>
<feature type="region of interest" description="R domain, interaction with RNA">
    <location>
        <begin position="2"/>
        <end position="102"/>
    </location>
</feature>
<feature type="region of interest" description="Involved in encapsidation" evidence="1">
    <location>
        <begin position="57"/>
        <end position="63"/>
    </location>
</feature>
<feature type="region of interest" description="S domain, virion shell">
    <location>
        <begin position="103"/>
        <end position="264"/>
    </location>
</feature>
<feature type="region of interest" description="P domain, projecting">
    <location>
        <begin position="265"/>
        <end position="388"/>
    </location>
</feature>
<feature type="sequence conflict" description="In Ref. 2; AA sequence." evidence="3" ref="2">
    <original>I</original>
    <variation>V</variation>
    <location>
        <position position="14"/>
    </location>
</feature>
<feature type="sequence conflict" description="In Ref. 2; AA sequence." evidence="3" ref="2">
    <original>HIS</original>
    <variation>YIG</variation>
    <location>
        <begin position="34"/>
        <end position="36"/>
    </location>
</feature>
<feature type="sequence conflict" description="In Ref. 2; AA sequence." evidence="3" ref="2">
    <original>T</original>
    <variation>TG</variation>
    <location>
        <position position="107"/>
    </location>
</feature>
<feature type="sequence conflict" description="In Ref. 2; AA sequence." evidence="3" ref="2">
    <original>L</original>
    <variation>S</variation>
    <location>
        <position position="131"/>
    </location>
</feature>
<feature type="sequence conflict" description="In Ref. 2; AA sequence." evidence="3" ref="2">
    <original>I</original>
    <variation>L</variation>
    <location>
        <position position="148"/>
    </location>
</feature>
<feature type="sequence conflict" description="In Ref. 2; AA sequence." evidence="3" ref="2">
    <original>H</original>
    <variation>D</variation>
    <location>
        <position position="163"/>
    </location>
</feature>
<feature type="sequence conflict" description="In Ref. 2; AA sequence." evidence="3" ref="2">
    <original>TN</original>
    <variation>AD</variation>
    <location>
        <begin position="249"/>
        <end position="250"/>
    </location>
</feature>
<feature type="sequence conflict" description="In Ref. 2; AA sequence." evidence="3" ref="2">
    <original>DVFISY</original>
    <variation>ELFLAR</variation>
    <location>
        <begin position="254"/>
        <end position="259"/>
    </location>
</feature>
<feature type="sequence conflict" description="In Ref. 2; AA sequence." evidence="3" ref="2">
    <original>TR</original>
    <variation>SK</variation>
    <location>
        <begin position="275"/>
        <end position="276"/>
    </location>
</feature>
<feature type="sequence conflict" description="In Ref. 2; AA sequence." evidence="3" ref="2">
    <original>V</original>
    <variation>A</variation>
    <location>
        <position position="308"/>
    </location>
</feature>
<feature type="sequence conflict" description="In Ref. 2; AA sequence." evidence="3" ref="2">
    <original>A</original>
    <variation>D</variation>
    <location>
        <position position="348"/>
    </location>
</feature>
<feature type="sequence conflict" description="In Ref. 2; AA sequence." evidence="3" ref="2">
    <original>TTGISSATVNVVRGT</original>
    <variation>VSGVAAGILLVGRA</variation>
    <location>
        <begin position="366"/>
        <end position="380"/>
    </location>
</feature>
<feature type="strand" evidence="4">
    <location>
        <begin position="95"/>
        <end position="97"/>
    </location>
</feature>
<feature type="strand" evidence="4">
    <location>
        <begin position="109"/>
        <end position="116"/>
    </location>
</feature>
<feature type="strand" evidence="4">
    <location>
        <begin position="119"/>
        <end position="123"/>
    </location>
</feature>
<feature type="turn" evidence="4">
    <location>
        <begin position="124"/>
        <end position="126"/>
    </location>
</feature>
<feature type="strand" evidence="4">
    <location>
        <begin position="134"/>
        <end position="136"/>
    </location>
</feature>
<feature type="helix" evidence="4">
    <location>
        <begin position="145"/>
        <end position="147"/>
    </location>
</feature>
<feature type="turn" evidence="4">
    <location>
        <begin position="148"/>
        <end position="150"/>
    </location>
</feature>
<feature type="strand" evidence="4">
    <location>
        <begin position="151"/>
        <end position="168"/>
    </location>
</feature>
<feature type="helix" evidence="4">
    <location>
        <begin position="192"/>
        <end position="195"/>
    </location>
</feature>
<feature type="strand" evidence="4">
    <location>
        <begin position="206"/>
        <end position="208"/>
    </location>
</feature>
<feature type="strand" evidence="4">
    <location>
        <begin position="210"/>
        <end position="213"/>
    </location>
</feature>
<feature type="strand" evidence="4">
    <location>
        <begin position="224"/>
        <end position="226"/>
    </location>
</feature>
<feature type="turn" evidence="4">
    <location>
        <begin position="231"/>
        <end position="234"/>
    </location>
</feature>
<feature type="strand" evidence="4">
    <location>
        <begin position="240"/>
        <end position="245"/>
    </location>
</feature>
<feature type="strand" evidence="4">
    <location>
        <begin position="247"/>
        <end position="249"/>
    </location>
</feature>
<feature type="strand" evidence="4">
    <location>
        <begin position="251"/>
        <end position="263"/>
    </location>
</feature>
<feature type="strand" evidence="4">
    <location>
        <begin position="272"/>
        <end position="276"/>
    </location>
</feature>
<feature type="strand" evidence="4">
    <location>
        <begin position="280"/>
        <end position="283"/>
    </location>
</feature>
<feature type="strand" evidence="4">
    <location>
        <begin position="292"/>
        <end position="294"/>
    </location>
</feature>
<feature type="strand" evidence="4">
    <location>
        <begin position="304"/>
        <end position="308"/>
    </location>
</feature>
<feature type="strand" evidence="4">
    <location>
        <begin position="310"/>
        <end position="319"/>
    </location>
</feature>
<feature type="strand" evidence="4">
    <location>
        <begin position="325"/>
        <end position="331"/>
    </location>
</feature>
<feature type="strand" evidence="4">
    <location>
        <begin position="333"/>
        <end position="340"/>
    </location>
</feature>
<feature type="strand" evidence="4">
    <location>
        <begin position="343"/>
        <end position="345"/>
    </location>
</feature>
<feature type="strand" evidence="4">
    <location>
        <begin position="347"/>
        <end position="355"/>
    </location>
</feature>
<feature type="strand" evidence="4">
    <location>
        <begin position="360"/>
        <end position="365"/>
    </location>
</feature>
<feature type="strand" evidence="4">
    <location>
        <begin position="371"/>
        <end position="376"/>
    </location>
</feature>
<accession>P11795</accession>
<accession>Q9IW10</accession>
<organism>
    <name type="scientific">Tomato bushy stunt virus (strain BS-3)</name>
    <name type="common">TBSV</name>
    <dbReference type="NCBI Taxonomy" id="12146"/>
    <lineage>
        <taxon>Viruses</taxon>
        <taxon>Riboviria</taxon>
        <taxon>Orthornavirae</taxon>
        <taxon>Kitrinoviricota</taxon>
        <taxon>Tolucaviricetes</taxon>
        <taxon>Tolivirales</taxon>
        <taxon>Tombusviridae</taxon>
        <taxon>Procedovirinae</taxon>
        <taxon>Tombusvirus</taxon>
        <taxon>Tombusvirus lycopersici</taxon>
    </lineage>
</organism>
<proteinExistence type="evidence at protein level"/>
<evidence type="ECO:0000250" key="1"/>
<evidence type="ECO:0000255" key="2"/>
<evidence type="ECO:0000305" key="3"/>
<evidence type="ECO:0007829" key="4">
    <source>
        <dbReference type="PDB" id="2TBV"/>
    </source>
</evidence>